<sequence length="386" mass="43981">MNEPAKHRLGCTRTPEPDIRLRKGHQLDDTRGSNNDNYQGDLEPSLETPVCSSYYENSPEEPECHDDNSQEDEGFMGMSPLLQAHHAMERMEEFVCKVWEGRWRVIPHDVLPDWLKDNDFLLHGHRPPMPSFRACFKSIFRIHTETGNIWTHLLGCVFFLCLGIFYMFRPNISFVAPLQEKVVFGLFFLGAILCLSFSWLFHTVYCHSEGVSRLFSKLDYSGIALLIMGSFVPWLYYSFYCNPQPCFIYLIVICVLGIAAIIVSQWDMFATPQYRGVRAGVFVGLGLSGIIPTLHYVISEGFLKAATIGQIGWLMLMASLYITGAALYAARIPERFFPGKCDIWFHSHQLFHIFVVAGAFVHFHGVSNLQEFRFMIGGGCTEEDAL</sequence>
<gene>
    <name evidence="12" type="primary">Adipor2</name>
    <name type="synonym">D6Ucla1e</name>
    <name evidence="1" type="synonym">Parq2</name>
</gene>
<comment type="function">
    <text evidence="3 4 5 6 8">Receptor for ADIPOQ, an essential hormone secreted by adipocytes that regulates glucose and lipid metabolism (PubMed:17068142, PubMed:17268472, PubMed:17327425, PubMed:24742672). Required for normal body fat and glucose homeostasis (PubMed:17068142, PubMed:17268472, PubMed:17327425, PubMed:24742672). ADIPOQ-binding activates a signaling cascade that leads to increased PPARA activity, and ultimately to increased fatty acid oxidation and glucose uptake (PubMed:12802337, PubMed:17268472, PubMed:24742672). Has intermediate affinity for globular and full-length adiponectin (PubMed:12802337). Required for normal revascularization after chronic ischemia caused by severing of blood vessels (PubMed:24742672).</text>
</comment>
<comment type="subunit">
    <text evidence="1 7">May form homooligomers and heterooligomers with ADIPOR1 (By similarity). Interacts with APPL2 (via BAR domain); ADIPOQ dissociates this interaction (PubMed:19661063).</text>
</comment>
<comment type="subcellular location">
    <subcellularLocation>
        <location evidence="1">Cell membrane</location>
        <topology evidence="1">Multi-pass membrane protein</topology>
    </subcellularLocation>
    <text evidence="1">Localized to the cell membrane and intracellular organelles.</text>
</comment>
<comment type="alternative products">
    <event type="alternative splicing"/>
    <isoform>
        <id>Q8BQS5-1</id>
        <name>1</name>
        <sequence type="displayed"/>
    </isoform>
    <isoform>
        <id>Q8BQS5-2</id>
        <name>2</name>
        <sequence type="described" ref="VSP_008887 VSP_008888"/>
    </isoform>
</comment>
<comment type="tissue specificity">
    <text evidence="3 6 8">Detected in liver and quadriceps muscle (at protein level) (PubMed:17327425). Highly expressed in liver (PubMed:12802337). Highly expressed in white adipose tissue, and at intermediate levels in brown adipose tissue (PubMed:24742672). Expressed at intermediate level in heart, kidney, lung and skeletal muscle. Weakly expressed in brain, spleen and testis.</text>
</comment>
<comment type="domain">
    <text evidence="1">The N-terminus is cytoplasmic and the C-terminus is extracellular, contrary to what is observed for G-protein coupled receptors. Unlike G-protein coupled receptors, transmembrane helices are not kinked or tilted relative to the plane of the membrane.</text>
</comment>
<comment type="disruption phenotype">
    <text evidence="4 5 6 8">Mutant mice are viable and fertile, and display increased glucose tolerance (PubMed:17068142, PubMed:17268472, PubMed:17327425, PubMed:24742672). On a high fat diet, they have lower fasting insulin levels than wild-type (PubMed:17327425, PubMed:24742672). Mutant mice have lower plasma cholesterol levels on a high fat diet, and possibly also on normal chow (PubMed:17068142, PubMed:17327425). The precise phenotype may depend on the experimental details and on genotype. Male and female mutant mice are somewhat leaner than wild-type on standard chow and do not display increased weight gain on a high fat diet (PubMed:17327425, PubMed:24742672). Mutant mice have normal body weight on standard chow, but decreased weight gain on a high-fat diet (PubMed:17068142). Female mutant mice display lower total body fat than wild-type on a high fat diet (PubMed:17327425). Both male and female mice have reduced levels of white and brown adipose tissue relative to wild-type (PubMed:17327425). Mutant male mice display decreased testis weight, atrophy of the seminiferous tubules and aspermia (PubMed:17327425). Both male and female mice display increased brain weight relative to wild-type (PubMed:17327425). Mutant mice have increased locomotor activity and increased energy expenditure on a high fat diet (PubMed:17327425). Mutant mice display impaired revascularization, limb retraction, atrophy and necrosis in response to limb ischemia caused by severing the femoral artery (PubMed:24742672). Hepatocytes from mice lacking both Adipor1 and Adipor2 show loss of adiponectin binding and lack of adiponectin-mediated activation of AMPK and Ppara (PubMed:17268472). Mice lacking both Adipor1 and Adipor2 display elevated glucose and insulin levels in blood plasma, indicative of glucose intolerance and insulin resistance (PubMed:17268472).</text>
</comment>
<comment type="similarity">
    <text evidence="11">Belongs to the ADIPOR family.</text>
</comment>
<evidence type="ECO:0000250" key="1">
    <source>
        <dbReference type="UniProtKB" id="Q86V24"/>
    </source>
</evidence>
<evidence type="ECO:0000256" key="2">
    <source>
        <dbReference type="SAM" id="MobiDB-lite"/>
    </source>
</evidence>
<evidence type="ECO:0000269" key="3">
    <source>
    </source>
</evidence>
<evidence type="ECO:0000269" key="4">
    <source>
    </source>
</evidence>
<evidence type="ECO:0000269" key="5">
    <source>
    </source>
</evidence>
<evidence type="ECO:0000269" key="6">
    <source>
    </source>
</evidence>
<evidence type="ECO:0000269" key="7">
    <source>
    </source>
</evidence>
<evidence type="ECO:0000269" key="8">
    <source>
    </source>
</evidence>
<evidence type="ECO:0000303" key="9">
    <source>
    </source>
</evidence>
<evidence type="ECO:0000303" key="10">
    <source>
    </source>
</evidence>
<evidence type="ECO:0000305" key="11"/>
<evidence type="ECO:0000312" key="12">
    <source>
        <dbReference type="MGI" id="MGI:93830"/>
    </source>
</evidence>
<name>PAQR2_MOUSE</name>
<accession>Q8BQS5</accession>
<accession>Q8CA45</accession>
<accession>Q8CID6</accession>
<proteinExistence type="evidence at protein level"/>
<dbReference type="EMBL" id="AK039667">
    <property type="protein sequence ID" value="BAC30412.1"/>
    <property type="molecule type" value="mRNA"/>
</dbReference>
<dbReference type="EMBL" id="AK046591">
    <property type="protein sequence ID" value="BAC32799.1"/>
    <property type="molecule type" value="mRNA"/>
</dbReference>
<dbReference type="EMBL" id="BC024094">
    <property type="protein sequence ID" value="AAH24094.2"/>
    <property type="molecule type" value="mRNA"/>
</dbReference>
<dbReference type="EMBL" id="BC064109">
    <property type="protein sequence ID" value="AAH64109.1"/>
    <property type="molecule type" value="mRNA"/>
</dbReference>
<dbReference type="CCDS" id="CCDS20473.1">
    <molecule id="Q8BQS5-1"/>
</dbReference>
<dbReference type="RefSeq" id="NP_001342621.1">
    <molecule id="Q8BQS5-1"/>
    <property type="nucleotide sequence ID" value="NM_001355692.1"/>
</dbReference>
<dbReference type="RefSeq" id="NP_932102.2">
    <molecule id="Q8BQS5-1"/>
    <property type="nucleotide sequence ID" value="NM_197985.3"/>
</dbReference>
<dbReference type="RefSeq" id="XP_006506601.1">
    <property type="nucleotide sequence ID" value="XM_006506538.2"/>
</dbReference>
<dbReference type="RefSeq" id="XP_011239750.1">
    <property type="nucleotide sequence ID" value="XM_011241448.2"/>
</dbReference>
<dbReference type="RefSeq" id="XP_030111434.1">
    <molecule id="Q8BQS5-1"/>
    <property type="nucleotide sequence ID" value="XM_030255574.1"/>
</dbReference>
<dbReference type="SMR" id="Q8BQS5"/>
<dbReference type="BioGRID" id="212865">
    <property type="interactions" value="6"/>
</dbReference>
<dbReference type="FunCoup" id="Q8BQS5">
    <property type="interactions" value="1055"/>
</dbReference>
<dbReference type="STRING" id="10090.ENSMUSP00000032272"/>
<dbReference type="iPTMnet" id="Q8BQS5"/>
<dbReference type="PhosphoSitePlus" id="Q8BQS5"/>
<dbReference type="PaxDb" id="10090-ENSMUSP00000032272"/>
<dbReference type="ProteomicsDB" id="287946">
    <molecule id="Q8BQS5-1"/>
</dbReference>
<dbReference type="ProteomicsDB" id="287947">
    <molecule id="Q8BQS5-2"/>
</dbReference>
<dbReference type="Antibodypedia" id="22097">
    <property type="antibodies" value="264 antibodies from 30 providers"/>
</dbReference>
<dbReference type="DNASU" id="68465"/>
<dbReference type="Ensembl" id="ENSMUST00000032272.13">
    <molecule id="Q8BQS5-1"/>
    <property type="protein sequence ID" value="ENSMUSP00000032272.7"/>
    <property type="gene ID" value="ENSMUSG00000030168.14"/>
</dbReference>
<dbReference type="Ensembl" id="ENSMUST00000169744.8">
    <molecule id="Q8BQS5-1"/>
    <property type="protein sequence ID" value="ENSMUSP00000126138.2"/>
    <property type="gene ID" value="ENSMUSG00000030168.14"/>
</dbReference>
<dbReference type="GeneID" id="68465"/>
<dbReference type="KEGG" id="mmu:68465"/>
<dbReference type="UCSC" id="uc009dmd.1">
    <molecule id="Q8BQS5-1"/>
    <property type="organism name" value="mouse"/>
</dbReference>
<dbReference type="UCSC" id="uc009dmf.1">
    <molecule id="Q8BQS5-2"/>
    <property type="organism name" value="mouse"/>
</dbReference>
<dbReference type="AGR" id="MGI:93830"/>
<dbReference type="CTD" id="79602"/>
<dbReference type="MGI" id="MGI:93830">
    <property type="gene designation" value="Adipor2"/>
</dbReference>
<dbReference type="VEuPathDB" id="HostDB:ENSMUSG00000030168"/>
<dbReference type="eggNOG" id="KOG0748">
    <property type="taxonomic scope" value="Eukaryota"/>
</dbReference>
<dbReference type="GeneTree" id="ENSGT00940000156451"/>
<dbReference type="HOGENOM" id="CLU_023075_1_0_1"/>
<dbReference type="InParanoid" id="Q8BQS5"/>
<dbReference type="OMA" id="EHECNDE"/>
<dbReference type="OrthoDB" id="5585746at2759"/>
<dbReference type="PhylomeDB" id="Q8BQS5"/>
<dbReference type="TreeFam" id="TF313640"/>
<dbReference type="Reactome" id="R-MMU-163680">
    <property type="pathway name" value="AMPK inhibits chREBP transcriptional activation activity"/>
</dbReference>
<dbReference type="BioGRID-ORCS" id="68465">
    <property type="hits" value="3 hits in 80 CRISPR screens"/>
</dbReference>
<dbReference type="ChiTaRS" id="Adipor2">
    <property type="organism name" value="mouse"/>
</dbReference>
<dbReference type="PRO" id="PR:Q8BQS5"/>
<dbReference type="Proteomes" id="UP000000589">
    <property type="component" value="Chromosome 6"/>
</dbReference>
<dbReference type="RNAct" id="Q8BQS5">
    <property type="molecule type" value="protein"/>
</dbReference>
<dbReference type="Bgee" id="ENSMUSG00000030168">
    <property type="expression patterns" value="Expressed in small intestine Peyer's patch and 275 other cell types or tissues"/>
</dbReference>
<dbReference type="ExpressionAtlas" id="Q8BQS5">
    <property type="expression patterns" value="baseline and differential"/>
</dbReference>
<dbReference type="GO" id="GO:0005886">
    <property type="term" value="C:plasma membrane"/>
    <property type="evidence" value="ECO:0000314"/>
    <property type="project" value="MGI"/>
</dbReference>
<dbReference type="GO" id="GO:0097003">
    <property type="term" value="F:adipokinetic hormone receptor activity"/>
    <property type="evidence" value="ECO:0000250"/>
    <property type="project" value="UniProtKB"/>
</dbReference>
<dbReference type="GO" id="GO:0055100">
    <property type="term" value="F:adiponectin binding"/>
    <property type="evidence" value="ECO:0000353"/>
    <property type="project" value="MGI"/>
</dbReference>
<dbReference type="GO" id="GO:0042802">
    <property type="term" value="F:identical protein binding"/>
    <property type="evidence" value="ECO:0000314"/>
    <property type="project" value="MGI"/>
</dbReference>
<dbReference type="GO" id="GO:0046872">
    <property type="term" value="F:metal ion binding"/>
    <property type="evidence" value="ECO:0007669"/>
    <property type="project" value="UniProtKB-KW"/>
</dbReference>
<dbReference type="GO" id="GO:0038023">
    <property type="term" value="F:signaling receptor activity"/>
    <property type="evidence" value="ECO:0000314"/>
    <property type="project" value="MGI"/>
</dbReference>
<dbReference type="GO" id="GO:0033211">
    <property type="term" value="P:adiponectin-activated signaling pathway"/>
    <property type="evidence" value="ECO:0000314"/>
    <property type="project" value="MGI"/>
</dbReference>
<dbReference type="GO" id="GO:0071398">
    <property type="term" value="P:cellular response to fatty acid"/>
    <property type="evidence" value="ECO:0007669"/>
    <property type="project" value="Ensembl"/>
</dbReference>
<dbReference type="GO" id="GO:0019395">
    <property type="term" value="P:fatty acid oxidation"/>
    <property type="evidence" value="ECO:0000250"/>
    <property type="project" value="UniProtKB"/>
</dbReference>
<dbReference type="GO" id="GO:0007565">
    <property type="term" value="P:female pregnancy"/>
    <property type="evidence" value="ECO:0007669"/>
    <property type="project" value="Ensembl"/>
</dbReference>
<dbReference type="GO" id="GO:0042593">
    <property type="term" value="P:glucose homeostasis"/>
    <property type="evidence" value="ECO:0000315"/>
    <property type="project" value="UniProtKB"/>
</dbReference>
<dbReference type="GO" id="GO:0007507">
    <property type="term" value="P:heart development"/>
    <property type="evidence" value="ECO:0007669"/>
    <property type="project" value="Ensembl"/>
</dbReference>
<dbReference type="GO" id="GO:0009755">
    <property type="term" value="P:hormone-mediated signaling pathway"/>
    <property type="evidence" value="ECO:0000250"/>
    <property type="project" value="UniProtKB"/>
</dbReference>
<dbReference type="GO" id="GO:0030308">
    <property type="term" value="P:negative regulation of cell growth"/>
    <property type="evidence" value="ECO:0007669"/>
    <property type="project" value="Ensembl"/>
</dbReference>
<dbReference type="GO" id="GO:0010629">
    <property type="term" value="P:negative regulation of gene expression"/>
    <property type="evidence" value="ECO:0007669"/>
    <property type="project" value="Ensembl"/>
</dbReference>
<dbReference type="GO" id="GO:0061871">
    <property type="term" value="P:negative regulation of hepatic stellate cell migration"/>
    <property type="evidence" value="ECO:0007669"/>
    <property type="project" value="Ensembl"/>
</dbReference>
<dbReference type="GO" id="GO:0120162">
    <property type="term" value="P:positive regulation of cold-induced thermogenesis"/>
    <property type="evidence" value="ECO:0000315"/>
    <property type="project" value="YuBioLab"/>
</dbReference>
<dbReference type="GO" id="GO:0046326">
    <property type="term" value="P:positive regulation of D-glucose import"/>
    <property type="evidence" value="ECO:0007669"/>
    <property type="project" value="Ensembl"/>
</dbReference>
<dbReference type="GO" id="GO:0014075">
    <property type="term" value="P:response to amine"/>
    <property type="evidence" value="ECO:0007669"/>
    <property type="project" value="Ensembl"/>
</dbReference>
<dbReference type="GO" id="GO:0045471">
    <property type="term" value="P:response to ethanol"/>
    <property type="evidence" value="ECO:0007669"/>
    <property type="project" value="Ensembl"/>
</dbReference>
<dbReference type="GO" id="GO:0009750">
    <property type="term" value="P:response to fructose"/>
    <property type="evidence" value="ECO:0007669"/>
    <property type="project" value="Ensembl"/>
</dbReference>
<dbReference type="GO" id="GO:0032496">
    <property type="term" value="P:response to lipopolysaccharide"/>
    <property type="evidence" value="ECO:0007669"/>
    <property type="project" value="Ensembl"/>
</dbReference>
<dbReference type="GO" id="GO:0007584">
    <property type="term" value="P:response to nutrient"/>
    <property type="evidence" value="ECO:0007669"/>
    <property type="project" value="Ensembl"/>
</dbReference>
<dbReference type="GO" id="GO:0009410">
    <property type="term" value="P:response to xenobiotic stimulus"/>
    <property type="evidence" value="ECO:0007669"/>
    <property type="project" value="Ensembl"/>
</dbReference>
<dbReference type="GO" id="GO:0061042">
    <property type="term" value="P:vascular wound healing"/>
    <property type="evidence" value="ECO:0000315"/>
    <property type="project" value="UniProtKB"/>
</dbReference>
<dbReference type="InterPro" id="IPR004254">
    <property type="entry name" value="AdipoR/HlyIII-related"/>
</dbReference>
<dbReference type="PANTHER" id="PTHR20855:SF33">
    <property type="entry name" value="ADIPONECTIN RECEPTOR PROTEIN 2"/>
    <property type="match status" value="1"/>
</dbReference>
<dbReference type="PANTHER" id="PTHR20855">
    <property type="entry name" value="ADIPOR/PROGESTIN RECEPTOR-RELATED"/>
    <property type="match status" value="1"/>
</dbReference>
<dbReference type="Pfam" id="PF03006">
    <property type="entry name" value="HlyIII"/>
    <property type="match status" value="1"/>
</dbReference>
<protein>
    <recommendedName>
        <fullName evidence="9">Adiponectin receptor protein 2</fullName>
    </recommendedName>
    <alternativeName>
        <fullName evidence="1">Progestin and adipoQ receptor family member 2</fullName>
    </alternativeName>
    <alternativeName>
        <fullName>Progestin and adipoQ receptor family member II</fullName>
    </alternativeName>
</protein>
<organism>
    <name type="scientific">Mus musculus</name>
    <name type="common">Mouse</name>
    <dbReference type="NCBI Taxonomy" id="10090"/>
    <lineage>
        <taxon>Eukaryota</taxon>
        <taxon>Metazoa</taxon>
        <taxon>Chordata</taxon>
        <taxon>Craniata</taxon>
        <taxon>Vertebrata</taxon>
        <taxon>Euteleostomi</taxon>
        <taxon>Mammalia</taxon>
        <taxon>Eutheria</taxon>
        <taxon>Euarchontoglires</taxon>
        <taxon>Glires</taxon>
        <taxon>Rodentia</taxon>
        <taxon>Myomorpha</taxon>
        <taxon>Muroidea</taxon>
        <taxon>Muridae</taxon>
        <taxon>Murinae</taxon>
        <taxon>Mus</taxon>
        <taxon>Mus</taxon>
    </lineage>
</organism>
<reference key="1">
    <citation type="journal article" date="2005" name="Science">
        <title>The transcriptional landscape of the mammalian genome.</title>
        <authorList>
            <person name="Carninci P."/>
            <person name="Kasukawa T."/>
            <person name="Katayama S."/>
            <person name="Gough J."/>
            <person name="Frith M.C."/>
            <person name="Maeda N."/>
            <person name="Oyama R."/>
            <person name="Ravasi T."/>
            <person name="Lenhard B."/>
            <person name="Wells C."/>
            <person name="Kodzius R."/>
            <person name="Shimokawa K."/>
            <person name="Bajic V.B."/>
            <person name="Brenner S.E."/>
            <person name="Batalov S."/>
            <person name="Forrest A.R."/>
            <person name="Zavolan M."/>
            <person name="Davis M.J."/>
            <person name="Wilming L.G."/>
            <person name="Aidinis V."/>
            <person name="Allen J.E."/>
            <person name="Ambesi-Impiombato A."/>
            <person name="Apweiler R."/>
            <person name="Aturaliya R.N."/>
            <person name="Bailey T.L."/>
            <person name="Bansal M."/>
            <person name="Baxter L."/>
            <person name="Beisel K.W."/>
            <person name="Bersano T."/>
            <person name="Bono H."/>
            <person name="Chalk A.M."/>
            <person name="Chiu K.P."/>
            <person name="Choudhary V."/>
            <person name="Christoffels A."/>
            <person name="Clutterbuck D.R."/>
            <person name="Crowe M.L."/>
            <person name="Dalla E."/>
            <person name="Dalrymple B.P."/>
            <person name="de Bono B."/>
            <person name="Della Gatta G."/>
            <person name="di Bernardo D."/>
            <person name="Down T."/>
            <person name="Engstrom P."/>
            <person name="Fagiolini M."/>
            <person name="Faulkner G."/>
            <person name="Fletcher C.F."/>
            <person name="Fukushima T."/>
            <person name="Furuno M."/>
            <person name="Futaki S."/>
            <person name="Gariboldi M."/>
            <person name="Georgii-Hemming P."/>
            <person name="Gingeras T.R."/>
            <person name="Gojobori T."/>
            <person name="Green R.E."/>
            <person name="Gustincich S."/>
            <person name="Harbers M."/>
            <person name="Hayashi Y."/>
            <person name="Hensch T.K."/>
            <person name="Hirokawa N."/>
            <person name="Hill D."/>
            <person name="Huminiecki L."/>
            <person name="Iacono M."/>
            <person name="Ikeo K."/>
            <person name="Iwama A."/>
            <person name="Ishikawa T."/>
            <person name="Jakt M."/>
            <person name="Kanapin A."/>
            <person name="Katoh M."/>
            <person name="Kawasawa Y."/>
            <person name="Kelso J."/>
            <person name="Kitamura H."/>
            <person name="Kitano H."/>
            <person name="Kollias G."/>
            <person name="Krishnan S.P."/>
            <person name="Kruger A."/>
            <person name="Kummerfeld S.K."/>
            <person name="Kurochkin I.V."/>
            <person name="Lareau L.F."/>
            <person name="Lazarevic D."/>
            <person name="Lipovich L."/>
            <person name="Liu J."/>
            <person name="Liuni S."/>
            <person name="McWilliam S."/>
            <person name="Madan Babu M."/>
            <person name="Madera M."/>
            <person name="Marchionni L."/>
            <person name="Matsuda H."/>
            <person name="Matsuzawa S."/>
            <person name="Miki H."/>
            <person name="Mignone F."/>
            <person name="Miyake S."/>
            <person name="Morris K."/>
            <person name="Mottagui-Tabar S."/>
            <person name="Mulder N."/>
            <person name="Nakano N."/>
            <person name="Nakauchi H."/>
            <person name="Ng P."/>
            <person name="Nilsson R."/>
            <person name="Nishiguchi S."/>
            <person name="Nishikawa S."/>
            <person name="Nori F."/>
            <person name="Ohara O."/>
            <person name="Okazaki Y."/>
            <person name="Orlando V."/>
            <person name="Pang K.C."/>
            <person name="Pavan W.J."/>
            <person name="Pavesi G."/>
            <person name="Pesole G."/>
            <person name="Petrovsky N."/>
            <person name="Piazza S."/>
            <person name="Reed J."/>
            <person name="Reid J.F."/>
            <person name="Ring B.Z."/>
            <person name="Ringwald M."/>
            <person name="Rost B."/>
            <person name="Ruan Y."/>
            <person name="Salzberg S.L."/>
            <person name="Sandelin A."/>
            <person name="Schneider C."/>
            <person name="Schoenbach C."/>
            <person name="Sekiguchi K."/>
            <person name="Semple C.A."/>
            <person name="Seno S."/>
            <person name="Sessa L."/>
            <person name="Sheng Y."/>
            <person name="Shibata Y."/>
            <person name="Shimada H."/>
            <person name="Shimada K."/>
            <person name="Silva D."/>
            <person name="Sinclair B."/>
            <person name="Sperling S."/>
            <person name="Stupka E."/>
            <person name="Sugiura K."/>
            <person name="Sultana R."/>
            <person name="Takenaka Y."/>
            <person name="Taki K."/>
            <person name="Tammoja K."/>
            <person name="Tan S.L."/>
            <person name="Tang S."/>
            <person name="Taylor M.S."/>
            <person name="Tegner J."/>
            <person name="Teichmann S.A."/>
            <person name="Ueda H.R."/>
            <person name="van Nimwegen E."/>
            <person name="Verardo R."/>
            <person name="Wei C.L."/>
            <person name="Yagi K."/>
            <person name="Yamanishi H."/>
            <person name="Zabarovsky E."/>
            <person name="Zhu S."/>
            <person name="Zimmer A."/>
            <person name="Hide W."/>
            <person name="Bult C."/>
            <person name="Grimmond S.M."/>
            <person name="Teasdale R.D."/>
            <person name="Liu E.T."/>
            <person name="Brusic V."/>
            <person name="Quackenbush J."/>
            <person name="Wahlestedt C."/>
            <person name="Mattick J.S."/>
            <person name="Hume D.A."/>
            <person name="Kai C."/>
            <person name="Sasaki D."/>
            <person name="Tomaru Y."/>
            <person name="Fukuda S."/>
            <person name="Kanamori-Katayama M."/>
            <person name="Suzuki M."/>
            <person name="Aoki J."/>
            <person name="Arakawa T."/>
            <person name="Iida J."/>
            <person name="Imamura K."/>
            <person name="Itoh M."/>
            <person name="Kato T."/>
            <person name="Kawaji H."/>
            <person name="Kawagashira N."/>
            <person name="Kawashima T."/>
            <person name="Kojima M."/>
            <person name="Kondo S."/>
            <person name="Konno H."/>
            <person name="Nakano K."/>
            <person name="Ninomiya N."/>
            <person name="Nishio T."/>
            <person name="Okada M."/>
            <person name="Plessy C."/>
            <person name="Shibata K."/>
            <person name="Shiraki T."/>
            <person name="Suzuki S."/>
            <person name="Tagami M."/>
            <person name="Waki K."/>
            <person name="Watahiki A."/>
            <person name="Okamura-Oho Y."/>
            <person name="Suzuki H."/>
            <person name="Kawai J."/>
            <person name="Hayashizaki Y."/>
        </authorList>
    </citation>
    <scope>NUCLEOTIDE SEQUENCE [LARGE SCALE MRNA] (ISOFORM 2)</scope>
    <source>
        <strain>C57BL/6J</strain>
        <tissue>Adipose tissue</tissue>
        <tissue>Spinal cord</tissue>
    </source>
</reference>
<reference key="2">
    <citation type="journal article" date="2004" name="Genome Res.">
        <title>The status, quality, and expansion of the NIH full-length cDNA project: the Mammalian Gene Collection (MGC).</title>
        <authorList>
            <consortium name="The MGC Project Team"/>
        </authorList>
    </citation>
    <scope>NUCLEOTIDE SEQUENCE [LARGE SCALE MRNA] (ISOFORM 1)</scope>
    <source>
        <strain>FVB/N</strain>
        <tissue>Liver</tissue>
        <tissue>Mammary gland</tissue>
    </source>
</reference>
<reference key="3">
    <citation type="journal article" date="2003" name="Nature">
        <title>Cloning of adiponectin receptors that mediate antidiabetic metabolic effects.</title>
        <authorList>
            <person name="Yamauchi T."/>
            <person name="Kamon J."/>
            <person name="Ito Y."/>
            <person name="Tsuchida A."/>
            <person name="Yokomizo T."/>
            <person name="Kita S."/>
            <person name="Sugiyama T."/>
            <person name="Miyagishi M."/>
            <person name="Hara K."/>
            <person name="Tsunoda M."/>
            <person name="Murakami K."/>
            <person name="Ohteki T."/>
            <person name="Uchida S."/>
            <person name="Takekawa S."/>
            <person name="Waki H."/>
            <person name="Tsuno N.H."/>
            <person name="Shibata Y."/>
            <person name="Terauchi Y."/>
            <person name="Froguel P."/>
            <person name="Tobe K."/>
            <person name="Koyasu S."/>
            <person name="Taira K."/>
            <person name="Kitamura T."/>
            <person name="Shimizu T."/>
            <person name="Nagai R."/>
            <person name="Kadowaki T."/>
        </authorList>
    </citation>
    <scope>FUNCTION</scope>
    <scope>TISSUE SPECIFICITY</scope>
</reference>
<reference key="4">
    <citation type="journal article" date="2007" name="Diabetes">
        <title>Opposing effects of adiponectin receptors 1 and 2 on energy metabolism.</title>
        <authorList>
            <person name="Bjursell M."/>
            <person name="Ahnmark A."/>
            <person name="Bohlooly-Y M."/>
            <person name="William-Olsson L."/>
            <person name="Rhedin M."/>
            <person name="Peng X.R."/>
            <person name="Ploj K."/>
            <person name="Gerdin A.K."/>
            <person name="Arnerup G."/>
            <person name="Elmgren A."/>
            <person name="Berg A.L."/>
            <person name="Oscarsson J."/>
            <person name="Linden D."/>
        </authorList>
    </citation>
    <scope>DISRUPTION PHENOTYPE</scope>
    <scope>FUNCTION</scope>
    <scope>TISSUE SPECIFICITY</scope>
</reference>
<reference key="5">
    <citation type="journal article" date="2007" name="Endocrinology">
        <title>Deficiency of adiponectin receptor 2 reduces diet-induced insulin resistance but promotes type 2 diabetes.</title>
        <authorList>
            <person name="Liu Y."/>
            <person name="Michael M.D."/>
            <person name="Kash S."/>
            <person name="Bensch W.R."/>
            <person name="Monia B.P."/>
            <person name="Murray S.F."/>
            <person name="Otto K.A."/>
            <person name="Syed S.K."/>
            <person name="Bhanot S."/>
            <person name="Sloop K.W."/>
            <person name="Sullivan J.M."/>
            <person name="Reifel-Miller A."/>
        </authorList>
    </citation>
    <scope>DISRUPTION PHENOTYPE</scope>
    <scope>FUNCTION</scope>
</reference>
<reference key="6">
    <citation type="journal article" date="2007" name="Nat. Med.">
        <title>Targeted disruption of AdipoR1 and AdipoR2 causes abrogation of adiponectin binding and metabolic actions.</title>
        <authorList>
            <person name="Yamauchi T."/>
            <person name="Nio Y."/>
            <person name="Maki T."/>
            <person name="Kobayashi M."/>
            <person name="Takazawa T."/>
            <person name="Iwabu M."/>
            <person name="Okada-Iwabu M."/>
            <person name="Kawamoto S."/>
            <person name="Kubota N."/>
            <person name="Kubota T."/>
            <person name="Ito Y."/>
            <person name="Kamon J."/>
            <person name="Tsuchida A."/>
            <person name="Kumagai K."/>
            <person name="Kozono H."/>
            <person name="Hada Y."/>
            <person name="Ogata H."/>
            <person name="Tokuyama K."/>
            <person name="Tsunoda M."/>
            <person name="Ide T."/>
            <person name="Murakami K."/>
            <person name="Awazawa M."/>
            <person name="Takamoto I."/>
            <person name="Froguel P."/>
            <person name="Hara K."/>
            <person name="Tobe K."/>
            <person name="Nagai R."/>
            <person name="Ueki K."/>
            <person name="Kadowaki T."/>
        </authorList>
    </citation>
    <scope>DISRUPTION PHENOTYPE</scope>
    <scope>FUNCTION</scope>
</reference>
<reference key="7">
    <citation type="journal article" date="2009" name="J. Biol. Chem.">
        <title>Yin-Yang regulation of adiponectin signaling by APPL isoforms in muscle cells.</title>
        <authorList>
            <person name="Wang C."/>
            <person name="Xin X."/>
            <person name="Xiang R."/>
            <person name="Ramos F.J."/>
            <person name="Liu M."/>
            <person name="Lee H.J."/>
            <person name="Chen H."/>
            <person name="Mao X."/>
            <person name="Kikani C.K."/>
            <person name="Liu F."/>
            <person name="Dong L.Q."/>
        </authorList>
    </citation>
    <scope>INTERACTION WITH APPL2</scope>
</reference>
<reference key="8">
    <citation type="journal article" date="2014" name="J. Biol. Chem.">
        <title>Divergent roles for adiponectin receptor 1 (AdipoR1) and AdipoR2 in mediating revascularization and metabolic dysfunction in vivo.</title>
        <authorList>
            <person name="Parker-Duffen J.L."/>
            <person name="Nakamura K."/>
            <person name="Silver M."/>
            <person name="Zuriaga M.A."/>
            <person name="MacLauchlan S."/>
            <person name="Aprahamian T.R."/>
            <person name="Walsh K."/>
        </authorList>
    </citation>
    <scope>DISRUPTION PHENOTYPE</scope>
    <scope>FUNCTION</scope>
    <scope>TISSUE SPECIFICITY</scope>
</reference>
<keyword id="KW-0025">Alternative splicing</keyword>
<keyword id="KW-1003">Cell membrane</keyword>
<keyword id="KW-0276">Fatty acid metabolism</keyword>
<keyword id="KW-0443">Lipid metabolism</keyword>
<keyword id="KW-0472">Membrane</keyword>
<keyword id="KW-0479">Metal-binding</keyword>
<keyword id="KW-0675">Receptor</keyword>
<keyword id="KW-1185">Reference proteome</keyword>
<keyword id="KW-0812">Transmembrane</keyword>
<keyword id="KW-1133">Transmembrane helix</keyword>
<keyword id="KW-0862">Zinc</keyword>
<feature type="chain" id="PRO_0000218830" description="Adiponectin receptor protein 2">
    <location>
        <begin position="1"/>
        <end position="386"/>
    </location>
</feature>
<feature type="topological domain" description="Cytoplasmic" evidence="1">
    <location>
        <begin position="1"/>
        <end position="147"/>
    </location>
</feature>
<feature type="transmembrane region" description="Helical; Name=1" evidence="1">
    <location>
        <begin position="148"/>
        <end position="168"/>
    </location>
</feature>
<feature type="topological domain" description="Extracellular" evidence="1">
    <location>
        <begin position="169"/>
        <end position="181"/>
    </location>
</feature>
<feature type="transmembrane region" description="Helical; Name=2" evidence="1">
    <location>
        <begin position="182"/>
        <end position="202"/>
    </location>
</feature>
<feature type="topological domain" description="Cytoplasmic" evidence="1">
    <location>
        <begin position="203"/>
        <end position="213"/>
    </location>
</feature>
<feature type="transmembrane region" description="Helical; Name=3" evidence="1">
    <location>
        <begin position="214"/>
        <end position="234"/>
    </location>
</feature>
<feature type="topological domain" description="Extracellular" evidence="1">
    <location>
        <begin position="235"/>
        <end position="245"/>
    </location>
</feature>
<feature type="transmembrane region" description="Helical; Name=4" evidence="1">
    <location>
        <begin position="246"/>
        <end position="266"/>
    </location>
</feature>
<feature type="topological domain" description="Cytoplasmic" evidence="1">
    <location>
        <begin position="267"/>
        <end position="273"/>
    </location>
</feature>
<feature type="transmembrane region" description="Helical; Name=5" evidence="1">
    <location>
        <begin position="274"/>
        <end position="294"/>
    </location>
</feature>
<feature type="topological domain" description="Extracellular" evidence="1">
    <location>
        <begin position="295"/>
        <end position="309"/>
    </location>
</feature>
<feature type="transmembrane region" description="Helical; Name=6" evidence="1">
    <location>
        <begin position="310"/>
        <end position="330"/>
    </location>
</feature>
<feature type="topological domain" description="Cytoplasmic" evidence="1">
    <location>
        <begin position="331"/>
        <end position="348"/>
    </location>
</feature>
<feature type="transmembrane region" description="Helical; Name=7" evidence="1">
    <location>
        <begin position="349"/>
        <end position="369"/>
    </location>
</feature>
<feature type="topological domain" description="Extracellular" evidence="1">
    <location>
        <begin position="370"/>
        <end position="386"/>
    </location>
</feature>
<feature type="region of interest" description="Disordered" evidence="2">
    <location>
        <begin position="1"/>
        <end position="72"/>
    </location>
</feature>
<feature type="compositionally biased region" description="Basic and acidic residues" evidence="2">
    <location>
        <begin position="15"/>
        <end position="31"/>
    </location>
</feature>
<feature type="compositionally biased region" description="Acidic residues" evidence="2">
    <location>
        <begin position="58"/>
        <end position="72"/>
    </location>
</feature>
<feature type="binding site" evidence="1">
    <location>
        <position position="202"/>
    </location>
    <ligand>
        <name>Zn(2+)</name>
        <dbReference type="ChEBI" id="CHEBI:29105"/>
    </ligand>
</feature>
<feature type="binding site" evidence="1">
    <location>
        <position position="348"/>
    </location>
    <ligand>
        <name>Zn(2+)</name>
        <dbReference type="ChEBI" id="CHEBI:29105"/>
    </ligand>
</feature>
<feature type="binding site" evidence="1">
    <location>
        <position position="352"/>
    </location>
    <ligand>
        <name>Zn(2+)</name>
        <dbReference type="ChEBI" id="CHEBI:29105"/>
    </ligand>
</feature>
<feature type="splice variant" id="VSP_008887" description="In isoform 2." evidence="10">
    <original>VFV</original>
    <variation>ECM</variation>
    <location>
        <begin position="281"/>
        <end position="283"/>
    </location>
</feature>
<feature type="splice variant" id="VSP_008888" description="In isoform 2." evidence="10">
    <location>
        <begin position="284"/>
        <end position="386"/>
    </location>
</feature>
<feature type="sequence conflict" description="In Ref. 1; BAC32799." evidence="11" ref="1">
    <original>E</original>
    <variation>G</variation>
    <location>
        <position position="92"/>
    </location>
</feature>